<name>PLK_DICDI</name>
<dbReference type="EC" id="2.7.11.1"/>
<dbReference type="EMBL" id="AAFI02000012">
    <property type="protein sequence ID" value="EAL70144.1"/>
    <property type="molecule type" value="Genomic_DNA"/>
</dbReference>
<dbReference type="RefSeq" id="XP_644113.1">
    <property type="nucleotide sequence ID" value="XM_639021.1"/>
</dbReference>
<dbReference type="SMR" id="Q86HN7"/>
<dbReference type="FunCoup" id="Q86HN7">
    <property type="interactions" value="77"/>
</dbReference>
<dbReference type="STRING" id="44689.Q86HN7"/>
<dbReference type="PaxDb" id="44689-DDB0216332"/>
<dbReference type="EnsemblProtists" id="EAL70144">
    <property type="protein sequence ID" value="EAL70144"/>
    <property type="gene ID" value="DDB_G0274503"/>
</dbReference>
<dbReference type="GeneID" id="8619543"/>
<dbReference type="KEGG" id="ddi:DDB_G0274503"/>
<dbReference type="dictyBase" id="DDB_G0274503">
    <property type="gene designation" value="plk"/>
</dbReference>
<dbReference type="VEuPathDB" id="AmoebaDB:DDB_G0274503"/>
<dbReference type="eggNOG" id="KOG0575">
    <property type="taxonomic scope" value="Eukaryota"/>
</dbReference>
<dbReference type="HOGENOM" id="CLU_000288_46_1_1"/>
<dbReference type="InParanoid" id="Q86HN7"/>
<dbReference type="OMA" id="NDDFHYR"/>
<dbReference type="Reactome" id="R-DDI-156711">
    <property type="pathway name" value="Polo-like kinase mediated events"/>
</dbReference>
<dbReference type="Reactome" id="R-DDI-162658">
    <property type="pathway name" value="Golgi Cisternae Pericentriolar Stack Reorganization"/>
</dbReference>
<dbReference type="Reactome" id="R-DDI-174178">
    <property type="pathway name" value="APC/C:Cdh1 mediated degradation of Cdc20 and other APC/C:Cdh1 targeted proteins in late mitosis/early G1"/>
</dbReference>
<dbReference type="Reactome" id="R-DDI-176412">
    <property type="pathway name" value="Phosphorylation of the APC/C"/>
</dbReference>
<dbReference type="Reactome" id="R-DDI-2299718">
    <property type="pathway name" value="Condensation of Prophase Chromosomes"/>
</dbReference>
<dbReference type="Reactome" id="R-DDI-2500257">
    <property type="pathway name" value="Resolution of Sister Chromatid Cohesion"/>
</dbReference>
<dbReference type="Reactome" id="R-DDI-2565942">
    <property type="pathway name" value="Regulation of PLK1 Activity at G2/M Transition"/>
</dbReference>
<dbReference type="Reactome" id="R-DDI-6804115">
    <property type="pathway name" value="TP53 regulates transcription of additional cell cycle genes whose exact role in the p53 pathway remain uncertain"/>
</dbReference>
<dbReference type="Reactome" id="R-DDI-9648025">
    <property type="pathway name" value="EML4 and NUDC in mitotic spindle formation"/>
</dbReference>
<dbReference type="PRO" id="PR:Q86HN7"/>
<dbReference type="Proteomes" id="UP000002195">
    <property type="component" value="Chromosome 2"/>
</dbReference>
<dbReference type="GO" id="GO:0005813">
    <property type="term" value="C:centrosome"/>
    <property type="evidence" value="ECO:0000314"/>
    <property type="project" value="dictyBase"/>
</dbReference>
<dbReference type="GO" id="GO:0005737">
    <property type="term" value="C:cytoplasm"/>
    <property type="evidence" value="ECO:0000318"/>
    <property type="project" value="GO_Central"/>
</dbReference>
<dbReference type="GO" id="GO:0000776">
    <property type="term" value="C:kinetochore"/>
    <property type="evidence" value="ECO:0000318"/>
    <property type="project" value="GO_Central"/>
</dbReference>
<dbReference type="GO" id="GO:0097431">
    <property type="term" value="C:mitotic spindle pole"/>
    <property type="evidence" value="ECO:0000314"/>
    <property type="project" value="dictyBase"/>
</dbReference>
<dbReference type="GO" id="GO:0005634">
    <property type="term" value="C:nucleus"/>
    <property type="evidence" value="ECO:0000318"/>
    <property type="project" value="GO_Central"/>
</dbReference>
<dbReference type="GO" id="GO:0000922">
    <property type="term" value="C:spindle pole"/>
    <property type="evidence" value="ECO:0000314"/>
    <property type="project" value="dictyBase"/>
</dbReference>
<dbReference type="GO" id="GO:0005524">
    <property type="term" value="F:ATP binding"/>
    <property type="evidence" value="ECO:0007669"/>
    <property type="project" value="UniProtKB-KW"/>
</dbReference>
<dbReference type="GO" id="GO:0106310">
    <property type="term" value="F:protein serine kinase activity"/>
    <property type="evidence" value="ECO:0007669"/>
    <property type="project" value="RHEA"/>
</dbReference>
<dbReference type="GO" id="GO:0004674">
    <property type="term" value="F:protein serine/threonine kinase activity"/>
    <property type="evidence" value="ECO:0000250"/>
    <property type="project" value="dictyBase"/>
</dbReference>
<dbReference type="GO" id="GO:0000278">
    <property type="term" value="P:mitotic cell cycle"/>
    <property type="evidence" value="ECO:0000314"/>
    <property type="project" value="dictyBase"/>
</dbReference>
<dbReference type="GO" id="GO:0007052">
    <property type="term" value="P:mitotic spindle organization"/>
    <property type="evidence" value="ECO:0000318"/>
    <property type="project" value="GO_Central"/>
</dbReference>
<dbReference type="CDD" id="cd13118">
    <property type="entry name" value="POLO_box_1"/>
    <property type="match status" value="1"/>
</dbReference>
<dbReference type="CDD" id="cd13117">
    <property type="entry name" value="POLO_box_2"/>
    <property type="match status" value="1"/>
</dbReference>
<dbReference type="CDD" id="cd14099">
    <property type="entry name" value="STKc_PLK"/>
    <property type="match status" value="1"/>
</dbReference>
<dbReference type="FunFam" id="1.10.510.10:FF:002678">
    <property type="entry name" value="Probable serine/threonine-protein kinase PLK"/>
    <property type="match status" value="1"/>
</dbReference>
<dbReference type="FunFam" id="3.30.1120.30:FF:000020">
    <property type="entry name" value="Serine/threonine-protein kinase PLK"/>
    <property type="match status" value="1"/>
</dbReference>
<dbReference type="FunFam" id="3.30.200.20:FF:000091">
    <property type="entry name" value="Serine/threonine-protein kinase PLK"/>
    <property type="match status" value="1"/>
</dbReference>
<dbReference type="Gene3D" id="3.30.200.20">
    <property type="entry name" value="Phosphorylase Kinase, domain 1"/>
    <property type="match status" value="1"/>
</dbReference>
<dbReference type="Gene3D" id="3.30.1120.30">
    <property type="entry name" value="POLO box domain"/>
    <property type="match status" value="2"/>
</dbReference>
<dbReference type="Gene3D" id="1.10.510.10">
    <property type="entry name" value="Transferase(Phosphotransferase) domain 1"/>
    <property type="match status" value="1"/>
</dbReference>
<dbReference type="InterPro" id="IPR011009">
    <property type="entry name" value="Kinase-like_dom_sf"/>
</dbReference>
<dbReference type="InterPro" id="IPR033701">
    <property type="entry name" value="POLO_box_1"/>
</dbReference>
<dbReference type="InterPro" id="IPR033695">
    <property type="entry name" value="POLO_box_2"/>
</dbReference>
<dbReference type="InterPro" id="IPR000959">
    <property type="entry name" value="POLO_box_dom"/>
</dbReference>
<dbReference type="InterPro" id="IPR036947">
    <property type="entry name" value="POLO_box_dom_sf"/>
</dbReference>
<dbReference type="InterPro" id="IPR000719">
    <property type="entry name" value="Prot_kinase_dom"/>
</dbReference>
<dbReference type="InterPro" id="IPR017441">
    <property type="entry name" value="Protein_kinase_ATP_BS"/>
</dbReference>
<dbReference type="InterPro" id="IPR008271">
    <property type="entry name" value="Ser/Thr_kinase_AS"/>
</dbReference>
<dbReference type="PANTHER" id="PTHR24345:SF0">
    <property type="entry name" value="CELL CYCLE SERINE_THREONINE-PROTEIN KINASE CDC5_MSD2"/>
    <property type="match status" value="1"/>
</dbReference>
<dbReference type="PANTHER" id="PTHR24345">
    <property type="entry name" value="SERINE/THREONINE-PROTEIN KINASE PLK"/>
    <property type="match status" value="1"/>
</dbReference>
<dbReference type="Pfam" id="PF00069">
    <property type="entry name" value="Pkinase"/>
    <property type="match status" value="1"/>
</dbReference>
<dbReference type="Pfam" id="PF00659">
    <property type="entry name" value="POLO_box"/>
    <property type="match status" value="2"/>
</dbReference>
<dbReference type="SMART" id="SM00220">
    <property type="entry name" value="S_TKc"/>
    <property type="match status" value="1"/>
</dbReference>
<dbReference type="SUPFAM" id="SSF82615">
    <property type="entry name" value="Polo-box domain"/>
    <property type="match status" value="2"/>
</dbReference>
<dbReference type="SUPFAM" id="SSF56112">
    <property type="entry name" value="Protein kinase-like (PK-like)"/>
    <property type="match status" value="1"/>
</dbReference>
<dbReference type="PROSITE" id="PS50078">
    <property type="entry name" value="POLO_BOX"/>
    <property type="match status" value="2"/>
</dbReference>
<dbReference type="PROSITE" id="PS00107">
    <property type="entry name" value="PROTEIN_KINASE_ATP"/>
    <property type="match status" value="1"/>
</dbReference>
<dbReference type="PROSITE" id="PS50011">
    <property type="entry name" value="PROTEIN_KINASE_DOM"/>
    <property type="match status" value="1"/>
</dbReference>
<dbReference type="PROSITE" id="PS00108">
    <property type="entry name" value="PROTEIN_KINASE_ST"/>
    <property type="match status" value="1"/>
</dbReference>
<proteinExistence type="inferred from homology"/>
<feature type="chain" id="PRO_0000362029" description="Probable serine/threonine-protein kinase PLK">
    <location>
        <begin position="1"/>
        <end position="978"/>
    </location>
</feature>
<feature type="domain" description="Protein kinase" evidence="3">
    <location>
        <begin position="163"/>
        <end position="416"/>
    </location>
</feature>
<feature type="domain" description="POLO box 1" evidence="2">
    <location>
        <begin position="696"/>
        <end position="780"/>
    </location>
</feature>
<feature type="domain" description="POLO box 2" evidence="2">
    <location>
        <begin position="826"/>
        <end position="904"/>
    </location>
</feature>
<feature type="region of interest" description="Disordered" evidence="5">
    <location>
        <begin position="19"/>
        <end position="66"/>
    </location>
</feature>
<feature type="region of interest" description="Disordered" evidence="5">
    <location>
        <begin position="121"/>
        <end position="143"/>
    </location>
</feature>
<feature type="region of interest" description="Disordered" evidence="5">
    <location>
        <begin position="463"/>
        <end position="554"/>
    </location>
</feature>
<feature type="region of interest" description="Disordered" evidence="5">
    <location>
        <begin position="601"/>
        <end position="638"/>
    </location>
</feature>
<feature type="region of interest" description="Disordered" evidence="5">
    <location>
        <begin position="798"/>
        <end position="819"/>
    </location>
</feature>
<feature type="region of interest" description="Disordered" evidence="5">
    <location>
        <begin position="908"/>
        <end position="978"/>
    </location>
</feature>
<feature type="coiled-coil region" evidence="1">
    <location>
        <begin position="497"/>
        <end position="555"/>
    </location>
</feature>
<feature type="coiled-coil region" evidence="1">
    <location>
        <begin position="592"/>
        <end position="630"/>
    </location>
</feature>
<feature type="compositionally biased region" description="Low complexity" evidence="5">
    <location>
        <begin position="19"/>
        <end position="36"/>
    </location>
</feature>
<feature type="compositionally biased region" description="Polar residues" evidence="5">
    <location>
        <begin position="37"/>
        <end position="53"/>
    </location>
</feature>
<feature type="compositionally biased region" description="Low complexity" evidence="5">
    <location>
        <begin position="54"/>
        <end position="64"/>
    </location>
</feature>
<feature type="compositionally biased region" description="Low complexity" evidence="5">
    <location>
        <begin position="473"/>
        <end position="492"/>
    </location>
</feature>
<feature type="compositionally biased region" description="Low complexity" evidence="5">
    <location>
        <begin position="500"/>
        <end position="549"/>
    </location>
</feature>
<feature type="compositionally biased region" description="Low complexity" evidence="5">
    <location>
        <begin position="913"/>
        <end position="978"/>
    </location>
</feature>
<feature type="active site" description="Proton acceptor" evidence="3 4">
    <location>
        <position position="286"/>
    </location>
</feature>
<feature type="binding site" evidence="3">
    <location>
        <begin position="169"/>
        <end position="177"/>
    </location>
    <ligand>
        <name>ATP</name>
        <dbReference type="ChEBI" id="CHEBI:30616"/>
    </ligand>
</feature>
<feature type="binding site" evidence="3">
    <location>
        <position position="192"/>
    </location>
    <ligand>
        <name>ATP</name>
        <dbReference type="ChEBI" id="CHEBI:30616"/>
    </ligand>
</feature>
<evidence type="ECO:0000255" key="1"/>
<evidence type="ECO:0000255" key="2">
    <source>
        <dbReference type="PROSITE-ProRule" id="PRU00154"/>
    </source>
</evidence>
<evidence type="ECO:0000255" key="3">
    <source>
        <dbReference type="PROSITE-ProRule" id="PRU00159"/>
    </source>
</evidence>
<evidence type="ECO:0000255" key="4">
    <source>
        <dbReference type="PROSITE-ProRule" id="PRU10027"/>
    </source>
</evidence>
<evidence type="ECO:0000256" key="5">
    <source>
        <dbReference type="SAM" id="MobiDB-lite"/>
    </source>
</evidence>
<comment type="catalytic activity">
    <reaction>
        <text>L-seryl-[protein] + ATP = O-phospho-L-seryl-[protein] + ADP + H(+)</text>
        <dbReference type="Rhea" id="RHEA:17989"/>
        <dbReference type="Rhea" id="RHEA-COMP:9863"/>
        <dbReference type="Rhea" id="RHEA-COMP:11604"/>
        <dbReference type="ChEBI" id="CHEBI:15378"/>
        <dbReference type="ChEBI" id="CHEBI:29999"/>
        <dbReference type="ChEBI" id="CHEBI:30616"/>
        <dbReference type="ChEBI" id="CHEBI:83421"/>
        <dbReference type="ChEBI" id="CHEBI:456216"/>
        <dbReference type="EC" id="2.7.11.1"/>
    </reaction>
</comment>
<comment type="catalytic activity">
    <reaction>
        <text>L-threonyl-[protein] + ATP = O-phospho-L-threonyl-[protein] + ADP + H(+)</text>
        <dbReference type="Rhea" id="RHEA:46608"/>
        <dbReference type="Rhea" id="RHEA-COMP:11060"/>
        <dbReference type="Rhea" id="RHEA-COMP:11605"/>
        <dbReference type="ChEBI" id="CHEBI:15378"/>
        <dbReference type="ChEBI" id="CHEBI:30013"/>
        <dbReference type="ChEBI" id="CHEBI:30616"/>
        <dbReference type="ChEBI" id="CHEBI:61977"/>
        <dbReference type="ChEBI" id="CHEBI:456216"/>
        <dbReference type="EC" id="2.7.11.1"/>
    </reaction>
</comment>
<comment type="similarity">
    <text evidence="3">Belongs to the protein kinase superfamily. Ser/Thr protein kinase family. CDC5/Polo subfamily.</text>
</comment>
<sequence length="978" mass="113599">MVSINQNFKLPISMNSQPIQIQQQQFKQPQQQPQQKSNSCFSDQENYPANIQPSSSTSSSSSSSIHITKSMVIRPPLESNQPQPQQQQQQQQTLQQIHHQQVQLQQQQSLQMQQQQLQQQQQQQQQQQMPPPQSLPNKSNEPQEPIVVYETIRSGDSKRLKEYRQGEFLGKGGFAKCYLMTEVETNRIYAAKIIPKSTLQKTRARSKLKSEIKIHSSLSHENIVKFEHCFENEENVYILLELCNQKTVMDIHKKRKYLMEYETKYYVYQVIMAVQYLHNNNIIHRDLKLGNLFIDNMRIKLGDFGLSTKVEHGERKKTICGTPNYIAPEILDNSNGHSYEVDVWSIGIILYTLLIGKPPFETSDVKHTYQRIKQNQYSFPDEPIISHYGKSLIISILNPVPEQRPNLTQILEHDFFTYSPIPKYLPVSSLTTAPSQSTINQNMGRPLSEKTNIVNQQHLQLAGTTSPTKNNNHHYQQYQQQPQQQYNNNYQQSFSPKKQINNMNNNNNNNNNNNNNNNNNNNNNNNNLKQYNYSNNNINYNNNNNNINNQFANLSPNSQQKLSEVENDDFHYRKLRRLEKMKENDLKTQLLIKQQYTNMNENQQQQQQQQQQQQQQQQQQQRVNNNINNNGNTVTVTTGNNTVNVQIKELETKIANNHISDSPPVSSNNNYPQQIQKQQPNFNNEFYLGMPNNLVYISQYADFTNKYGLAYVLSNSYVGAYFNDSTKIVTLIESEIAYYMEHAKGTDGDGRRVLNVTQQHPHDTQKKVTLIKYFLNHFTNSDTTNLLINTGATSSSINNNNNNNVENVTNNNNNNSNNSSNINPIYVKKWIKFDNGIAFRLSDKTIQVNYLDKSRIIVSSKDMVTFVPYRGQIITGTLNYFKNGDKKISEKIKYIYGTLSNNLYSKKPESSFQQLPQQQYQQPQHYQQQTQQPQPQPQQQQLPQQLPQPQQSPAKQHQYQPNQIQYQQSIPQPQLINQ</sequence>
<protein>
    <recommendedName>
        <fullName>Probable serine/threonine-protein kinase PLK</fullName>
        <ecNumber>2.7.11.1</ecNumber>
    </recommendedName>
    <alternativeName>
        <fullName>Polo-like kinase</fullName>
    </alternativeName>
</protein>
<gene>
    <name type="primary">PLK</name>
    <name type="ORF">DDB_G0274503</name>
</gene>
<organism>
    <name type="scientific">Dictyostelium discoideum</name>
    <name type="common">Social amoeba</name>
    <dbReference type="NCBI Taxonomy" id="44689"/>
    <lineage>
        <taxon>Eukaryota</taxon>
        <taxon>Amoebozoa</taxon>
        <taxon>Evosea</taxon>
        <taxon>Eumycetozoa</taxon>
        <taxon>Dictyostelia</taxon>
        <taxon>Dictyosteliales</taxon>
        <taxon>Dictyosteliaceae</taxon>
        <taxon>Dictyostelium</taxon>
    </lineage>
</organism>
<reference key="1">
    <citation type="journal article" date="2002" name="Nature">
        <title>Sequence and analysis of chromosome 2 of Dictyostelium discoideum.</title>
        <authorList>
            <person name="Gloeckner G."/>
            <person name="Eichinger L."/>
            <person name="Szafranski K."/>
            <person name="Pachebat J.A."/>
            <person name="Bankier A.T."/>
            <person name="Dear P.H."/>
            <person name="Lehmann R."/>
            <person name="Baumgart C."/>
            <person name="Parra G."/>
            <person name="Abril J.F."/>
            <person name="Guigo R."/>
            <person name="Kumpf K."/>
            <person name="Tunggal B."/>
            <person name="Cox E.C."/>
            <person name="Quail M.A."/>
            <person name="Platzer M."/>
            <person name="Rosenthal A."/>
            <person name="Noegel A.A."/>
        </authorList>
    </citation>
    <scope>NUCLEOTIDE SEQUENCE [LARGE SCALE GENOMIC DNA]</scope>
    <source>
        <strain>AX4</strain>
    </source>
</reference>
<reference key="2">
    <citation type="journal article" date="2005" name="Nature">
        <title>The genome of the social amoeba Dictyostelium discoideum.</title>
        <authorList>
            <person name="Eichinger L."/>
            <person name="Pachebat J.A."/>
            <person name="Gloeckner G."/>
            <person name="Rajandream M.A."/>
            <person name="Sucgang R."/>
            <person name="Berriman M."/>
            <person name="Song J."/>
            <person name="Olsen R."/>
            <person name="Szafranski K."/>
            <person name="Xu Q."/>
            <person name="Tunggal B."/>
            <person name="Kummerfeld S."/>
            <person name="Madera M."/>
            <person name="Konfortov B.A."/>
            <person name="Rivero F."/>
            <person name="Bankier A.T."/>
            <person name="Lehmann R."/>
            <person name="Hamlin N."/>
            <person name="Davies R."/>
            <person name="Gaudet P."/>
            <person name="Fey P."/>
            <person name="Pilcher K."/>
            <person name="Chen G."/>
            <person name="Saunders D."/>
            <person name="Sodergren E.J."/>
            <person name="Davis P."/>
            <person name="Kerhornou A."/>
            <person name="Nie X."/>
            <person name="Hall N."/>
            <person name="Anjard C."/>
            <person name="Hemphill L."/>
            <person name="Bason N."/>
            <person name="Farbrother P."/>
            <person name="Desany B."/>
            <person name="Just E."/>
            <person name="Morio T."/>
            <person name="Rost R."/>
            <person name="Churcher C.M."/>
            <person name="Cooper J."/>
            <person name="Haydock S."/>
            <person name="van Driessche N."/>
            <person name="Cronin A."/>
            <person name="Goodhead I."/>
            <person name="Muzny D.M."/>
            <person name="Mourier T."/>
            <person name="Pain A."/>
            <person name="Lu M."/>
            <person name="Harper D."/>
            <person name="Lindsay R."/>
            <person name="Hauser H."/>
            <person name="James K.D."/>
            <person name="Quiles M."/>
            <person name="Madan Babu M."/>
            <person name="Saito T."/>
            <person name="Buchrieser C."/>
            <person name="Wardroper A."/>
            <person name="Felder M."/>
            <person name="Thangavelu M."/>
            <person name="Johnson D."/>
            <person name="Knights A."/>
            <person name="Loulseged H."/>
            <person name="Mungall K.L."/>
            <person name="Oliver K."/>
            <person name="Price C."/>
            <person name="Quail M.A."/>
            <person name="Urushihara H."/>
            <person name="Hernandez J."/>
            <person name="Rabbinowitsch E."/>
            <person name="Steffen D."/>
            <person name="Sanders M."/>
            <person name="Ma J."/>
            <person name="Kohara Y."/>
            <person name="Sharp S."/>
            <person name="Simmonds M.N."/>
            <person name="Spiegler S."/>
            <person name="Tivey A."/>
            <person name="Sugano S."/>
            <person name="White B."/>
            <person name="Walker D."/>
            <person name="Woodward J.R."/>
            <person name="Winckler T."/>
            <person name="Tanaka Y."/>
            <person name="Shaulsky G."/>
            <person name="Schleicher M."/>
            <person name="Weinstock G.M."/>
            <person name="Rosenthal A."/>
            <person name="Cox E.C."/>
            <person name="Chisholm R.L."/>
            <person name="Gibbs R.A."/>
            <person name="Loomis W.F."/>
            <person name="Platzer M."/>
            <person name="Kay R.R."/>
            <person name="Williams J.G."/>
            <person name="Dear P.H."/>
            <person name="Noegel A.A."/>
            <person name="Barrell B.G."/>
            <person name="Kuspa A."/>
        </authorList>
    </citation>
    <scope>NUCLEOTIDE SEQUENCE [LARGE SCALE GENOMIC DNA]</scope>
    <source>
        <strain>AX4</strain>
    </source>
</reference>
<reference key="3">
    <citation type="journal article" date="2004" name="Int. Rev. Cytol.">
        <title>Molecular and functional analysis of the dictyostelium centrosome.</title>
        <authorList>
            <person name="Graef R."/>
            <person name="Daunderer C."/>
            <person name="Schulz I."/>
        </authorList>
    </citation>
    <scope>IDENTIFICATION</scope>
</reference>
<accession>Q86HN7</accession>
<accession>Q555F6</accession>
<keyword id="KW-0067">ATP-binding</keyword>
<keyword id="KW-0175">Coiled coil</keyword>
<keyword id="KW-0418">Kinase</keyword>
<keyword id="KW-0547">Nucleotide-binding</keyword>
<keyword id="KW-1185">Reference proteome</keyword>
<keyword id="KW-0677">Repeat</keyword>
<keyword id="KW-0723">Serine/threonine-protein kinase</keyword>
<keyword id="KW-0808">Transferase</keyword>